<proteinExistence type="inferred from homology"/>
<feature type="chain" id="PRO_1000004529" description="Translation initiation factor IF-3">
    <location>
        <begin position="1"/>
        <end position="173"/>
    </location>
</feature>
<reference key="1">
    <citation type="submission" date="2006-12" db="EMBL/GenBank/DDBJ databases">
        <authorList>
            <person name="Hendrix L."/>
            <person name="Mohamoud Y."/>
            <person name="Radune D."/>
            <person name="Shvartsbeyn A."/>
            <person name="Daugherty S."/>
            <person name="Dodson R."/>
            <person name="Durkin A.S."/>
            <person name="Harkins D."/>
            <person name="Huot H."/>
            <person name="Kothari S.P."/>
            <person name="Madupu R."/>
            <person name="Li J."/>
            <person name="Nelson W.C."/>
            <person name="Shrivastava S."/>
            <person name="Giglio M.G."/>
            <person name="Haft D."/>
            <person name="Selengut J."/>
            <person name="Fraser-Ligget C."/>
            <person name="Seshadri R."/>
        </authorList>
    </citation>
    <scope>NUCLEOTIDE SEQUENCE [LARGE SCALE GENOMIC DNA]</scope>
    <source>
        <strain>ATCC 35685 / KC583 / Herrer 020/F12,63</strain>
    </source>
</reference>
<evidence type="ECO:0000255" key="1">
    <source>
        <dbReference type="HAMAP-Rule" id="MF_00080"/>
    </source>
</evidence>
<name>IF3_BARBK</name>
<organism>
    <name type="scientific">Bartonella bacilliformis (strain ATCC 35685 / KC583 / Herrer 020/F12,63)</name>
    <dbReference type="NCBI Taxonomy" id="360095"/>
    <lineage>
        <taxon>Bacteria</taxon>
        <taxon>Pseudomonadati</taxon>
        <taxon>Pseudomonadota</taxon>
        <taxon>Alphaproteobacteria</taxon>
        <taxon>Hyphomicrobiales</taxon>
        <taxon>Bartonellaceae</taxon>
        <taxon>Bartonella</taxon>
    </lineage>
</organism>
<keyword id="KW-0963">Cytoplasm</keyword>
<keyword id="KW-0396">Initiation factor</keyword>
<keyword id="KW-0648">Protein biosynthesis</keyword>
<sequence length="173" mass="19667">MTPNQKDGPRSNQEIRVPCIQLINDEGQNQGIVSTQEALAMAANIGLDLVEIVPNAEPPVCKIVDLGKLKYQNQKKAAETRKKQKIIEIKEIKLRPNVDVHDYGVKLKAIHRFIEHGNKVKITLRFRGREMAHQDLGVKLLERMKEDVSEIAKIESEPKLENRQMMMVIAPKS</sequence>
<protein>
    <recommendedName>
        <fullName evidence="1">Translation initiation factor IF-3</fullName>
    </recommendedName>
</protein>
<accession>A1UUD5</accession>
<dbReference type="EMBL" id="CP000524">
    <property type="protein sequence ID" value="ABM44716.1"/>
    <property type="molecule type" value="Genomic_DNA"/>
</dbReference>
<dbReference type="RefSeq" id="WP_005768129.1">
    <property type="nucleotide sequence ID" value="NC_008783.1"/>
</dbReference>
<dbReference type="SMR" id="A1UUD5"/>
<dbReference type="STRING" id="360095.BARBAKC583_1341"/>
<dbReference type="GeneID" id="4684344"/>
<dbReference type="KEGG" id="bbk:BARBAKC583_1341"/>
<dbReference type="PATRIC" id="fig|360095.6.peg.1314"/>
<dbReference type="eggNOG" id="COG0290">
    <property type="taxonomic scope" value="Bacteria"/>
</dbReference>
<dbReference type="HOGENOM" id="CLU_054919_3_2_5"/>
<dbReference type="OrthoDB" id="9806014at2"/>
<dbReference type="Proteomes" id="UP000000643">
    <property type="component" value="Chromosome"/>
</dbReference>
<dbReference type="GO" id="GO:0005829">
    <property type="term" value="C:cytosol"/>
    <property type="evidence" value="ECO:0007669"/>
    <property type="project" value="TreeGrafter"/>
</dbReference>
<dbReference type="GO" id="GO:0016020">
    <property type="term" value="C:membrane"/>
    <property type="evidence" value="ECO:0007669"/>
    <property type="project" value="TreeGrafter"/>
</dbReference>
<dbReference type="GO" id="GO:0043022">
    <property type="term" value="F:ribosome binding"/>
    <property type="evidence" value="ECO:0007669"/>
    <property type="project" value="TreeGrafter"/>
</dbReference>
<dbReference type="GO" id="GO:0003743">
    <property type="term" value="F:translation initiation factor activity"/>
    <property type="evidence" value="ECO:0007669"/>
    <property type="project" value="UniProtKB-UniRule"/>
</dbReference>
<dbReference type="GO" id="GO:0032790">
    <property type="term" value="P:ribosome disassembly"/>
    <property type="evidence" value="ECO:0007669"/>
    <property type="project" value="TreeGrafter"/>
</dbReference>
<dbReference type="FunFam" id="3.30.110.10:FF:000001">
    <property type="entry name" value="Translation initiation factor IF-3"/>
    <property type="match status" value="1"/>
</dbReference>
<dbReference type="Gene3D" id="3.30.110.10">
    <property type="entry name" value="Translation initiation factor 3 (IF-3), C-terminal domain"/>
    <property type="match status" value="1"/>
</dbReference>
<dbReference type="Gene3D" id="3.10.20.80">
    <property type="entry name" value="Translation initiation factor 3 (IF-3), N-terminal domain"/>
    <property type="match status" value="1"/>
</dbReference>
<dbReference type="HAMAP" id="MF_00080">
    <property type="entry name" value="IF_3"/>
    <property type="match status" value="1"/>
</dbReference>
<dbReference type="InterPro" id="IPR036788">
    <property type="entry name" value="T_IF-3_C_sf"/>
</dbReference>
<dbReference type="InterPro" id="IPR036787">
    <property type="entry name" value="T_IF-3_N_sf"/>
</dbReference>
<dbReference type="InterPro" id="IPR001288">
    <property type="entry name" value="Translation_initiation_fac_3"/>
</dbReference>
<dbReference type="InterPro" id="IPR019815">
    <property type="entry name" value="Translation_initiation_fac_3_C"/>
</dbReference>
<dbReference type="InterPro" id="IPR019814">
    <property type="entry name" value="Translation_initiation_fac_3_N"/>
</dbReference>
<dbReference type="NCBIfam" id="TIGR00168">
    <property type="entry name" value="infC"/>
    <property type="match status" value="1"/>
</dbReference>
<dbReference type="PANTHER" id="PTHR10938">
    <property type="entry name" value="TRANSLATION INITIATION FACTOR IF-3"/>
    <property type="match status" value="1"/>
</dbReference>
<dbReference type="PANTHER" id="PTHR10938:SF0">
    <property type="entry name" value="TRANSLATION INITIATION FACTOR IF-3, MITOCHONDRIAL"/>
    <property type="match status" value="1"/>
</dbReference>
<dbReference type="Pfam" id="PF00707">
    <property type="entry name" value="IF3_C"/>
    <property type="match status" value="1"/>
</dbReference>
<dbReference type="Pfam" id="PF05198">
    <property type="entry name" value="IF3_N"/>
    <property type="match status" value="1"/>
</dbReference>
<dbReference type="SUPFAM" id="SSF55200">
    <property type="entry name" value="Translation initiation factor IF3, C-terminal domain"/>
    <property type="match status" value="1"/>
</dbReference>
<dbReference type="SUPFAM" id="SSF54364">
    <property type="entry name" value="Translation initiation factor IF3, N-terminal domain"/>
    <property type="match status" value="1"/>
</dbReference>
<gene>
    <name evidence="1" type="primary">infC</name>
    <name type="ordered locus">BARBAKC583_1341</name>
</gene>
<comment type="function">
    <text evidence="1">IF-3 binds to the 30S ribosomal subunit and shifts the equilibrium between 70S ribosomes and their 50S and 30S subunits in favor of the free subunits, thus enhancing the availability of 30S subunits on which protein synthesis initiation begins.</text>
</comment>
<comment type="subunit">
    <text evidence="1">Monomer.</text>
</comment>
<comment type="subcellular location">
    <subcellularLocation>
        <location evidence="1">Cytoplasm</location>
    </subcellularLocation>
</comment>
<comment type="similarity">
    <text evidence="1">Belongs to the IF-3 family.</text>
</comment>